<proteinExistence type="inferred from homology"/>
<protein>
    <recommendedName>
        <fullName evidence="1">Ribosomal RNA small subunit methyltransferase J</fullName>
        <ecNumber evidence="1">2.1.1.242</ecNumber>
    </recommendedName>
    <alternativeName>
        <fullName evidence="1">16S rRNA m2G1516 methyltransferase</fullName>
    </alternativeName>
    <alternativeName>
        <fullName evidence="1">rRNA (guanine-N(2)-)-methyltransferase</fullName>
    </alternativeName>
</protein>
<feature type="chain" id="PRO_0000316258" description="Ribosomal RNA small subunit methyltransferase J">
    <location>
        <begin position="1"/>
        <end position="205"/>
    </location>
</feature>
<feature type="binding site" evidence="1">
    <location>
        <begin position="56"/>
        <end position="57"/>
    </location>
    <ligand>
        <name>S-adenosyl-L-methionine</name>
        <dbReference type="ChEBI" id="CHEBI:59789"/>
    </ligand>
</feature>
<feature type="binding site" evidence="1">
    <location>
        <begin position="72"/>
        <end position="73"/>
    </location>
    <ligand>
        <name>S-adenosyl-L-methionine</name>
        <dbReference type="ChEBI" id="CHEBI:59789"/>
    </ligand>
</feature>
<feature type="binding site" evidence="1">
    <location>
        <position position="124"/>
    </location>
    <ligand>
        <name>S-adenosyl-L-methionine</name>
        <dbReference type="ChEBI" id="CHEBI:59789"/>
    </ligand>
</feature>
<dbReference type="EC" id="2.1.1.242" evidence="1"/>
<dbReference type="EMBL" id="CP000758">
    <property type="protein sequence ID" value="ABS13766.1"/>
    <property type="molecule type" value="Genomic_DNA"/>
</dbReference>
<dbReference type="RefSeq" id="WP_012091216.1">
    <property type="nucleotide sequence ID" value="NC_009667.1"/>
</dbReference>
<dbReference type="SMR" id="A6WXR2"/>
<dbReference type="STRING" id="439375.Oant_1046"/>
<dbReference type="KEGG" id="oan:Oant_1046"/>
<dbReference type="PATRIC" id="fig|439375.7.peg.1094"/>
<dbReference type="eggNOG" id="COG0500">
    <property type="taxonomic scope" value="Bacteria"/>
</dbReference>
<dbReference type="HOGENOM" id="CLU_076324_0_0_5"/>
<dbReference type="Proteomes" id="UP000002301">
    <property type="component" value="Chromosome 1"/>
</dbReference>
<dbReference type="GO" id="GO:0005737">
    <property type="term" value="C:cytoplasm"/>
    <property type="evidence" value="ECO:0007669"/>
    <property type="project" value="UniProtKB-SubCell"/>
</dbReference>
<dbReference type="GO" id="GO:0008990">
    <property type="term" value="F:rRNA (guanine-N2-)-methyltransferase activity"/>
    <property type="evidence" value="ECO:0007669"/>
    <property type="project" value="UniProtKB-UniRule"/>
</dbReference>
<dbReference type="Gene3D" id="3.40.50.150">
    <property type="entry name" value="Vaccinia Virus protein VP39"/>
    <property type="match status" value="1"/>
</dbReference>
<dbReference type="HAMAP" id="MF_01523">
    <property type="entry name" value="16SrRNA_methyltr_J"/>
    <property type="match status" value="1"/>
</dbReference>
<dbReference type="InterPro" id="IPR007536">
    <property type="entry name" value="16SrRNA_methylTrfase_J"/>
</dbReference>
<dbReference type="InterPro" id="IPR029063">
    <property type="entry name" value="SAM-dependent_MTases_sf"/>
</dbReference>
<dbReference type="PANTHER" id="PTHR36112">
    <property type="entry name" value="RIBOSOMAL RNA SMALL SUBUNIT METHYLTRANSFERASE J"/>
    <property type="match status" value="1"/>
</dbReference>
<dbReference type="PANTHER" id="PTHR36112:SF1">
    <property type="entry name" value="RIBOSOMAL RNA SMALL SUBUNIT METHYLTRANSFERASE J"/>
    <property type="match status" value="1"/>
</dbReference>
<dbReference type="Pfam" id="PF04445">
    <property type="entry name" value="SAM_MT"/>
    <property type="match status" value="1"/>
</dbReference>
<dbReference type="SUPFAM" id="SSF53335">
    <property type="entry name" value="S-adenosyl-L-methionine-dependent methyltransferases"/>
    <property type="match status" value="1"/>
</dbReference>
<comment type="function">
    <text evidence="1">Specifically methylates the guanosine in position 1516 of 16S rRNA.</text>
</comment>
<comment type="catalytic activity">
    <reaction evidence="1">
        <text>guanosine(1516) in 16S rRNA + S-adenosyl-L-methionine = N(2)-methylguanosine(1516) in 16S rRNA + S-adenosyl-L-homocysteine + H(+)</text>
        <dbReference type="Rhea" id="RHEA:43220"/>
        <dbReference type="Rhea" id="RHEA-COMP:10412"/>
        <dbReference type="Rhea" id="RHEA-COMP:10413"/>
        <dbReference type="ChEBI" id="CHEBI:15378"/>
        <dbReference type="ChEBI" id="CHEBI:57856"/>
        <dbReference type="ChEBI" id="CHEBI:59789"/>
        <dbReference type="ChEBI" id="CHEBI:74269"/>
        <dbReference type="ChEBI" id="CHEBI:74481"/>
        <dbReference type="EC" id="2.1.1.242"/>
    </reaction>
</comment>
<comment type="subcellular location">
    <subcellularLocation>
        <location evidence="1">Cytoplasm</location>
    </subcellularLocation>
</comment>
<comment type="similarity">
    <text evidence="1">Belongs to the methyltransferase superfamily. RsmJ family.</text>
</comment>
<accession>A6WXR2</accession>
<name>RSMJ_BRUA4</name>
<organism>
    <name type="scientific">Brucella anthropi (strain ATCC 49188 / DSM 6882 / CCUG 24695 / JCM 21032 / LMG 3331 / NBRC 15819 / NCTC 12168 / Alc 37)</name>
    <name type="common">Ochrobactrum anthropi</name>
    <dbReference type="NCBI Taxonomy" id="439375"/>
    <lineage>
        <taxon>Bacteria</taxon>
        <taxon>Pseudomonadati</taxon>
        <taxon>Pseudomonadota</taxon>
        <taxon>Alphaproteobacteria</taxon>
        <taxon>Hyphomicrobiales</taxon>
        <taxon>Brucellaceae</taxon>
        <taxon>Brucella/Ochrobactrum group</taxon>
        <taxon>Brucella</taxon>
    </lineage>
</organism>
<sequence length="205" mass="22126">MSQKIDTSELVVDFVGGAVGHRFRSGEGRGQALAKAAGLTRDATPEIVDATAGLGRDAFLLASLGAKVTLIERSEKMHALLAEGLARAAEEGGRYAETVARMTLLLGDSSLLLPDLKPQVVLVDPMHPPRGNSALVKKEMRQIREIVGTDPDAERLMQVALEAAQNRVVLKWPLRADPMVGLRKPSHQILGKSTRYDVFVKAKLS</sequence>
<gene>
    <name evidence="1" type="primary">rsmJ</name>
    <name type="ordered locus">Oant_1046</name>
</gene>
<reference key="1">
    <citation type="journal article" date="2011" name="J. Bacteriol.">
        <title>Genome of Ochrobactrum anthropi ATCC 49188 T, a versatile opportunistic pathogen and symbiont of several eukaryotic hosts.</title>
        <authorList>
            <person name="Chain P.S."/>
            <person name="Lang D.M."/>
            <person name="Comerci D.J."/>
            <person name="Malfatti S.A."/>
            <person name="Vergez L.M."/>
            <person name="Shin M."/>
            <person name="Ugalde R.A."/>
            <person name="Garcia E."/>
            <person name="Tolmasky M.E."/>
        </authorList>
    </citation>
    <scope>NUCLEOTIDE SEQUENCE [LARGE SCALE GENOMIC DNA]</scope>
    <source>
        <strain>ATCC 49188 / DSM 6882 / CCUG 24695 / JCM 21032 / LMG 3331 / NBRC 15819 / NCTC 12168 / Alc 37</strain>
    </source>
</reference>
<keyword id="KW-0963">Cytoplasm</keyword>
<keyword id="KW-0489">Methyltransferase</keyword>
<keyword id="KW-1185">Reference proteome</keyword>
<keyword id="KW-0698">rRNA processing</keyword>
<keyword id="KW-0949">S-adenosyl-L-methionine</keyword>
<keyword id="KW-0808">Transferase</keyword>
<evidence type="ECO:0000255" key="1">
    <source>
        <dbReference type="HAMAP-Rule" id="MF_01523"/>
    </source>
</evidence>